<name>RPOB_MYCS5</name>
<proteinExistence type="inferred from homology"/>
<feature type="chain" id="PRO_0000224080" description="DNA-directed RNA polymerase subunit beta">
    <location>
        <begin position="1"/>
        <end position="1202"/>
    </location>
</feature>
<comment type="function">
    <text evidence="1">DNA-dependent RNA polymerase catalyzes the transcription of DNA into RNA using the four ribonucleoside triphosphates as substrates.</text>
</comment>
<comment type="catalytic activity">
    <reaction evidence="1">
        <text>RNA(n) + a ribonucleoside 5'-triphosphate = RNA(n+1) + diphosphate</text>
        <dbReference type="Rhea" id="RHEA:21248"/>
        <dbReference type="Rhea" id="RHEA-COMP:14527"/>
        <dbReference type="Rhea" id="RHEA-COMP:17342"/>
        <dbReference type="ChEBI" id="CHEBI:33019"/>
        <dbReference type="ChEBI" id="CHEBI:61557"/>
        <dbReference type="ChEBI" id="CHEBI:140395"/>
        <dbReference type="EC" id="2.7.7.6"/>
    </reaction>
</comment>
<comment type="subunit">
    <text evidence="1">The RNAP catalytic core consists of 2 alpha, 1 beta, 1 beta' and 1 omega subunit. When a sigma factor is associated with the core the holoenzyme is formed, which can initiate transcription.</text>
</comment>
<comment type="similarity">
    <text evidence="1">Belongs to the RNA polymerase beta chain family.</text>
</comment>
<reference key="1">
    <citation type="journal article" date="2005" name="J. Bacteriol.">
        <title>Swine and poultry pathogens: the complete genome sequences of two strains of Mycoplasma hyopneumoniae and a strain of Mycoplasma synoviae.</title>
        <authorList>
            <person name="Vasconcelos A.T.R."/>
            <person name="Ferreira H.B."/>
            <person name="Bizarro C.V."/>
            <person name="Bonatto S.L."/>
            <person name="Carvalho M.O."/>
            <person name="Pinto P.M."/>
            <person name="Almeida D.F."/>
            <person name="Almeida L.G.P."/>
            <person name="Almeida R."/>
            <person name="Alves-Junior L."/>
            <person name="Assuncao E.N."/>
            <person name="Azevedo V.A.C."/>
            <person name="Bogo M.R."/>
            <person name="Brigido M.M."/>
            <person name="Brocchi M."/>
            <person name="Burity H.A."/>
            <person name="Camargo A.A."/>
            <person name="Camargo S.S."/>
            <person name="Carepo M.S."/>
            <person name="Carraro D.M."/>
            <person name="de Mattos Cascardo J.C."/>
            <person name="Castro L.A."/>
            <person name="Cavalcanti G."/>
            <person name="Chemale G."/>
            <person name="Collevatti R.G."/>
            <person name="Cunha C.W."/>
            <person name="Dallagiovanna B."/>
            <person name="Dambros B.P."/>
            <person name="Dellagostin O.A."/>
            <person name="Falcao C."/>
            <person name="Fantinatti-Garboggini F."/>
            <person name="Felipe M.S.S."/>
            <person name="Fiorentin L."/>
            <person name="Franco G.R."/>
            <person name="Freitas N.S.A."/>
            <person name="Frias D."/>
            <person name="Grangeiro T.B."/>
            <person name="Grisard E.C."/>
            <person name="Guimaraes C.T."/>
            <person name="Hungria M."/>
            <person name="Jardim S.N."/>
            <person name="Krieger M.A."/>
            <person name="Laurino J.P."/>
            <person name="Lima L.F.A."/>
            <person name="Lopes M.I."/>
            <person name="Loreto E.L.S."/>
            <person name="Madeira H.M.F."/>
            <person name="Manfio G.P."/>
            <person name="Maranhao A.Q."/>
            <person name="Martinkovics C.T."/>
            <person name="Medeiros S.R.B."/>
            <person name="Moreira M.A.M."/>
            <person name="Neiva M."/>
            <person name="Ramalho-Neto C.E."/>
            <person name="Nicolas M.F."/>
            <person name="Oliveira S.C."/>
            <person name="Paixao R.F.C."/>
            <person name="Pedrosa F.O."/>
            <person name="Pena S.D.J."/>
            <person name="Pereira M."/>
            <person name="Pereira-Ferrari L."/>
            <person name="Piffer I."/>
            <person name="Pinto L.S."/>
            <person name="Potrich D.P."/>
            <person name="Salim A.C.M."/>
            <person name="Santos F.R."/>
            <person name="Schmitt R."/>
            <person name="Schneider M.P.C."/>
            <person name="Schrank A."/>
            <person name="Schrank I.S."/>
            <person name="Schuck A.F."/>
            <person name="Seuanez H.N."/>
            <person name="Silva D.W."/>
            <person name="Silva R."/>
            <person name="Silva S.C."/>
            <person name="Soares C.M.A."/>
            <person name="Souza K.R.L."/>
            <person name="Souza R.C."/>
            <person name="Staats C.C."/>
            <person name="Steffens M.B.R."/>
            <person name="Teixeira S.M.R."/>
            <person name="Urmenyi T.P."/>
            <person name="Vainstein M.H."/>
            <person name="Zuccherato L.W."/>
            <person name="Simpson A.J.G."/>
            <person name="Zaha A."/>
        </authorList>
    </citation>
    <scope>NUCLEOTIDE SEQUENCE [LARGE SCALE GENOMIC DNA]</scope>
    <source>
        <strain>53</strain>
    </source>
</reference>
<evidence type="ECO:0000255" key="1">
    <source>
        <dbReference type="HAMAP-Rule" id="MF_01321"/>
    </source>
</evidence>
<protein>
    <recommendedName>
        <fullName evidence="1">DNA-directed RNA polymerase subunit beta</fullName>
        <shortName evidence="1">RNAP subunit beta</shortName>
        <ecNumber evidence="1">2.7.7.6</ecNumber>
    </recommendedName>
    <alternativeName>
        <fullName evidence="1">RNA polymerase subunit beta</fullName>
    </alternativeName>
    <alternativeName>
        <fullName evidence="1">Transcriptase subunit beta</fullName>
    </alternativeName>
</protein>
<sequence>MQKDKKNYKLRKFGPITERRDYSITKHSLPVGDILATSKKSYQDFINKKIEELLNEIYPIEASNKEASLEYEKKSVKFELPFKKAEHENLQIKTCKAKKTNFSMKVYITLKKVVSQTGVVKKEKILLGEIPYITSSGSFIINGSEKVIVSQLIRSPGAYFGVSVRNKQSEDLFNKLEILPRIGSWIEVSHKVTSANLDAIKIKIDKNKNINIVTFLASFGLLADDIRYLFGKNEVLEETIRKNKTIDITEFSRQEIMDLCQEKIFRIIRKGDRISEESKRSLLSGMLFDKKRYNLSKTGRYMLNNKLSLVERITNTYLAQKVVSHLGNTFDVGTYVTYEIAKEIQESFEAKAKDNKSNLHLEKIPNINPDDVYYKINKDNKSLNKRINIARIKIWPTKRAMDANETPSEVIGNDPKATEEHLLLSDIIAAISYYLNLTVGIGQDDDPDSLMNKRIVSVGELLEGELRIALLKLEKATRERMGAKEPDKITAKNVTNNKLITNQMKTFFNTSKLAQFMDQINPLAEISNKRRVTSLGPGGLNRDTAQFEVRDVHSTHYGRICPIETPEGPNIGLILNYAIYSTVNELGFLQTPYYKVNDGVVDYNDVRYLTSYEEIGYAFAQSSVHVNDKNEIIDEQITIKKDYNYIIGSPKDIDFLEVSSKQIVSVAAAAIPFLENNDANRALMGSNMQRQAVPLIEAEAPLVATGIEADIAKFSSYNIVANNDGEVIYVDGTKIQVRTAKKIDTYNLKNFEKSNQGTIIQQKPIVKVGDHVKEGDLLVDGSSFKDGEMALGKNLLVGFTTWNGYNFEDAIIINERLVKDDVLTSIYIEEQTIQFRISKSSEDIMTRDIPNVSKYSMRNLDEFGIIKVGSEVVAGDVLVGRISPKGEENPSQEEKLLNAIFNQRPQNYKDTSLKVKNGHNGTVIHVEVLSRENGDILEDGLDSIIKVYIAQKRKIKVGDKMAGRHGNKGVISIILPEEDMPHLEDGTPLDIMLNPQGVPSRMNIGQVLEMHLGMAAKKLGTKFVTPSFDGIKKETIEDLLQEANLDKSGKQVVIDPITGEKFDNPISVGVIYMLKLNHMVDDKMHARSVGPYSLITQQPLGGKSQNGGQRFGEMETWALESYGASNILQEILTYKSDDIYSRNLVYKALVNDSAIPNPGMPESFNVLSNELKGLLMKLGITETESNSDELIQHFDHLGVEHE</sequence>
<organism>
    <name type="scientific">Mycoplasmopsis synoviae (strain 53)</name>
    <name type="common">Mycoplasma synoviae</name>
    <dbReference type="NCBI Taxonomy" id="262723"/>
    <lineage>
        <taxon>Bacteria</taxon>
        <taxon>Bacillati</taxon>
        <taxon>Mycoplasmatota</taxon>
        <taxon>Mycoplasmoidales</taxon>
        <taxon>Metamycoplasmataceae</taxon>
        <taxon>Mycoplasmopsis</taxon>
    </lineage>
</organism>
<keyword id="KW-0240">DNA-directed RNA polymerase</keyword>
<keyword id="KW-0548">Nucleotidyltransferase</keyword>
<keyword id="KW-1185">Reference proteome</keyword>
<keyword id="KW-0804">Transcription</keyword>
<keyword id="KW-0808">Transferase</keyword>
<dbReference type="EC" id="2.7.7.6" evidence="1"/>
<dbReference type="EMBL" id="AE017245">
    <property type="protein sequence ID" value="AAZ43894.2"/>
    <property type="molecule type" value="Genomic_DNA"/>
</dbReference>
<dbReference type="RefSeq" id="WP_041352028.1">
    <property type="nucleotide sequence ID" value="NC_007294.1"/>
</dbReference>
<dbReference type="SMR" id="Q4A5S7"/>
<dbReference type="STRING" id="262723.MS53_0485"/>
<dbReference type="KEGG" id="msy:MS53_0485"/>
<dbReference type="eggNOG" id="COG0085">
    <property type="taxonomic scope" value="Bacteria"/>
</dbReference>
<dbReference type="HOGENOM" id="CLU_000524_4_1_14"/>
<dbReference type="OrthoDB" id="9803954at2"/>
<dbReference type="Proteomes" id="UP000000549">
    <property type="component" value="Chromosome"/>
</dbReference>
<dbReference type="GO" id="GO:0000428">
    <property type="term" value="C:DNA-directed RNA polymerase complex"/>
    <property type="evidence" value="ECO:0007669"/>
    <property type="project" value="UniProtKB-KW"/>
</dbReference>
<dbReference type="GO" id="GO:0003677">
    <property type="term" value="F:DNA binding"/>
    <property type="evidence" value="ECO:0007669"/>
    <property type="project" value="UniProtKB-UniRule"/>
</dbReference>
<dbReference type="GO" id="GO:0003899">
    <property type="term" value="F:DNA-directed RNA polymerase activity"/>
    <property type="evidence" value="ECO:0007669"/>
    <property type="project" value="UniProtKB-UniRule"/>
</dbReference>
<dbReference type="GO" id="GO:0032549">
    <property type="term" value="F:ribonucleoside binding"/>
    <property type="evidence" value="ECO:0007669"/>
    <property type="project" value="InterPro"/>
</dbReference>
<dbReference type="GO" id="GO:0006351">
    <property type="term" value="P:DNA-templated transcription"/>
    <property type="evidence" value="ECO:0007669"/>
    <property type="project" value="UniProtKB-UniRule"/>
</dbReference>
<dbReference type="CDD" id="cd00653">
    <property type="entry name" value="RNA_pol_B_RPB2"/>
    <property type="match status" value="1"/>
</dbReference>
<dbReference type="Gene3D" id="2.40.50.100">
    <property type="match status" value="1"/>
</dbReference>
<dbReference type="Gene3D" id="2.40.50.150">
    <property type="match status" value="1"/>
</dbReference>
<dbReference type="Gene3D" id="3.90.1100.10">
    <property type="match status" value="2"/>
</dbReference>
<dbReference type="Gene3D" id="2.30.150.10">
    <property type="entry name" value="DNA-directed RNA polymerase, beta subunit, external 1 domain"/>
    <property type="match status" value="1"/>
</dbReference>
<dbReference type="Gene3D" id="2.40.270.10">
    <property type="entry name" value="DNA-directed RNA polymerase, subunit 2, domain 6"/>
    <property type="match status" value="2"/>
</dbReference>
<dbReference type="Gene3D" id="3.90.1800.10">
    <property type="entry name" value="RNA polymerase alpha subunit dimerisation domain"/>
    <property type="match status" value="1"/>
</dbReference>
<dbReference type="Gene3D" id="3.90.1110.10">
    <property type="entry name" value="RNA polymerase Rpb2, domain 2"/>
    <property type="match status" value="2"/>
</dbReference>
<dbReference type="HAMAP" id="MF_01321">
    <property type="entry name" value="RNApol_bact_RpoB"/>
    <property type="match status" value="1"/>
</dbReference>
<dbReference type="InterPro" id="IPR042107">
    <property type="entry name" value="DNA-dir_RNA_pol_bsu_ext_1_sf"/>
</dbReference>
<dbReference type="InterPro" id="IPR019462">
    <property type="entry name" value="DNA-dir_RNA_pol_bsu_external_1"/>
</dbReference>
<dbReference type="InterPro" id="IPR015712">
    <property type="entry name" value="DNA-dir_RNA_pol_su2"/>
</dbReference>
<dbReference type="InterPro" id="IPR007120">
    <property type="entry name" value="DNA-dir_RNAP_su2_dom"/>
</dbReference>
<dbReference type="InterPro" id="IPR037033">
    <property type="entry name" value="DNA-dir_RNAP_su2_hyb_sf"/>
</dbReference>
<dbReference type="InterPro" id="IPR010243">
    <property type="entry name" value="RNA_pol_bsu_bac"/>
</dbReference>
<dbReference type="InterPro" id="IPR007121">
    <property type="entry name" value="RNA_pol_bsu_CS"/>
</dbReference>
<dbReference type="InterPro" id="IPR007644">
    <property type="entry name" value="RNA_pol_bsu_protrusion"/>
</dbReference>
<dbReference type="InterPro" id="IPR007642">
    <property type="entry name" value="RNA_pol_Rpb2_2"/>
</dbReference>
<dbReference type="InterPro" id="IPR037034">
    <property type="entry name" value="RNA_pol_Rpb2_2_sf"/>
</dbReference>
<dbReference type="InterPro" id="IPR007645">
    <property type="entry name" value="RNA_pol_Rpb2_3"/>
</dbReference>
<dbReference type="InterPro" id="IPR007641">
    <property type="entry name" value="RNA_pol_Rpb2_7"/>
</dbReference>
<dbReference type="InterPro" id="IPR014724">
    <property type="entry name" value="RNA_pol_RPB2_OB-fold"/>
</dbReference>
<dbReference type="NCBIfam" id="NF001616">
    <property type="entry name" value="PRK00405.1"/>
    <property type="match status" value="1"/>
</dbReference>
<dbReference type="PANTHER" id="PTHR20856">
    <property type="entry name" value="DNA-DIRECTED RNA POLYMERASE I SUBUNIT 2"/>
    <property type="match status" value="1"/>
</dbReference>
<dbReference type="Pfam" id="PF04563">
    <property type="entry name" value="RNA_pol_Rpb2_1"/>
    <property type="match status" value="1"/>
</dbReference>
<dbReference type="Pfam" id="PF04561">
    <property type="entry name" value="RNA_pol_Rpb2_2"/>
    <property type="match status" value="1"/>
</dbReference>
<dbReference type="Pfam" id="PF04565">
    <property type="entry name" value="RNA_pol_Rpb2_3"/>
    <property type="match status" value="1"/>
</dbReference>
<dbReference type="Pfam" id="PF10385">
    <property type="entry name" value="RNA_pol_Rpb2_45"/>
    <property type="match status" value="1"/>
</dbReference>
<dbReference type="Pfam" id="PF00562">
    <property type="entry name" value="RNA_pol_Rpb2_6"/>
    <property type="match status" value="1"/>
</dbReference>
<dbReference type="Pfam" id="PF04560">
    <property type="entry name" value="RNA_pol_Rpb2_7"/>
    <property type="match status" value="1"/>
</dbReference>
<dbReference type="SUPFAM" id="SSF64484">
    <property type="entry name" value="beta and beta-prime subunits of DNA dependent RNA-polymerase"/>
    <property type="match status" value="1"/>
</dbReference>
<dbReference type="PROSITE" id="PS01166">
    <property type="entry name" value="RNA_POL_BETA"/>
    <property type="match status" value="1"/>
</dbReference>
<gene>
    <name evidence="1" type="primary">rpoB</name>
    <name type="ordered locus">MS53_0485</name>
</gene>
<accession>Q4A5S7</accession>